<name>HSLU_PSEP1</name>
<reference key="1">
    <citation type="submission" date="2007-05" db="EMBL/GenBank/DDBJ databases">
        <title>Complete sequence of Pseudomonas putida F1.</title>
        <authorList>
            <consortium name="US DOE Joint Genome Institute"/>
            <person name="Copeland A."/>
            <person name="Lucas S."/>
            <person name="Lapidus A."/>
            <person name="Barry K."/>
            <person name="Detter J.C."/>
            <person name="Glavina del Rio T."/>
            <person name="Hammon N."/>
            <person name="Israni S."/>
            <person name="Dalin E."/>
            <person name="Tice H."/>
            <person name="Pitluck S."/>
            <person name="Chain P."/>
            <person name="Malfatti S."/>
            <person name="Shin M."/>
            <person name="Vergez L."/>
            <person name="Schmutz J."/>
            <person name="Larimer F."/>
            <person name="Land M."/>
            <person name="Hauser L."/>
            <person name="Kyrpides N."/>
            <person name="Lykidis A."/>
            <person name="Parales R."/>
            <person name="Richardson P."/>
        </authorList>
    </citation>
    <scope>NUCLEOTIDE SEQUENCE [LARGE SCALE GENOMIC DNA]</scope>
    <source>
        <strain>ATCC 700007 / DSM 6899 / JCM 31910 / BCRC 17059 / LMG 24140 / F1</strain>
    </source>
</reference>
<gene>
    <name evidence="1" type="primary">hslU</name>
    <name type="ordered locus">Pput_4875</name>
</gene>
<feature type="chain" id="PRO_1000012777" description="ATP-dependent protease ATPase subunit HslU">
    <location>
        <begin position="1"/>
        <end position="447"/>
    </location>
</feature>
<feature type="binding site" evidence="1">
    <location>
        <position position="17"/>
    </location>
    <ligand>
        <name>ATP</name>
        <dbReference type="ChEBI" id="CHEBI:30616"/>
    </ligand>
</feature>
<feature type="binding site" evidence="1">
    <location>
        <begin position="59"/>
        <end position="64"/>
    </location>
    <ligand>
        <name>ATP</name>
        <dbReference type="ChEBI" id="CHEBI:30616"/>
    </ligand>
</feature>
<feature type="binding site" evidence="1">
    <location>
        <position position="256"/>
    </location>
    <ligand>
        <name>ATP</name>
        <dbReference type="ChEBI" id="CHEBI:30616"/>
    </ligand>
</feature>
<feature type="binding site" evidence="1">
    <location>
        <position position="321"/>
    </location>
    <ligand>
        <name>ATP</name>
        <dbReference type="ChEBI" id="CHEBI:30616"/>
    </ligand>
</feature>
<feature type="binding site" evidence="1">
    <location>
        <position position="393"/>
    </location>
    <ligand>
        <name>ATP</name>
        <dbReference type="ChEBI" id="CHEBI:30616"/>
    </ligand>
</feature>
<organism>
    <name type="scientific">Pseudomonas putida (strain ATCC 700007 / DSM 6899 / JCM 31910 / BCRC 17059 / LMG 24140 / F1)</name>
    <dbReference type="NCBI Taxonomy" id="351746"/>
    <lineage>
        <taxon>Bacteria</taxon>
        <taxon>Pseudomonadati</taxon>
        <taxon>Pseudomonadota</taxon>
        <taxon>Gammaproteobacteria</taxon>
        <taxon>Pseudomonadales</taxon>
        <taxon>Pseudomonadaceae</taxon>
        <taxon>Pseudomonas</taxon>
    </lineage>
</organism>
<proteinExistence type="inferred from homology"/>
<keyword id="KW-0067">ATP-binding</keyword>
<keyword id="KW-0143">Chaperone</keyword>
<keyword id="KW-0963">Cytoplasm</keyword>
<keyword id="KW-0547">Nucleotide-binding</keyword>
<keyword id="KW-0346">Stress response</keyword>
<evidence type="ECO:0000255" key="1">
    <source>
        <dbReference type="HAMAP-Rule" id="MF_00249"/>
    </source>
</evidence>
<comment type="function">
    <text evidence="1">ATPase subunit of a proteasome-like degradation complex; this subunit has chaperone activity. The binding of ATP and its subsequent hydrolysis by HslU are essential for unfolding of protein substrates subsequently hydrolyzed by HslV. HslU recognizes the N-terminal part of its protein substrates and unfolds these before they are guided to HslV for hydrolysis.</text>
</comment>
<comment type="subunit">
    <text evidence="1">A double ring-shaped homohexamer of HslV is capped on each side by a ring-shaped HslU homohexamer. The assembly of the HslU/HslV complex is dependent on binding of ATP.</text>
</comment>
<comment type="subcellular location">
    <subcellularLocation>
        <location evidence="1">Cytoplasm</location>
    </subcellularLocation>
</comment>
<comment type="similarity">
    <text evidence="1">Belongs to the ClpX chaperone family. HslU subfamily.</text>
</comment>
<dbReference type="EMBL" id="CP000712">
    <property type="protein sequence ID" value="ABQ80995.1"/>
    <property type="molecule type" value="Genomic_DNA"/>
</dbReference>
<dbReference type="SMR" id="A5WA35"/>
<dbReference type="KEGG" id="ppf:Pput_4875"/>
<dbReference type="eggNOG" id="COG1220">
    <property type="taxonomic scope" value="Bacteria"/>
</dbReference>
<dbReference type="HOGENOM" id="CLU_033123_0_0_6"/>
<dbReference type="GO" id="GO:0009376">
    <property type="term" value="C:HslUV protease complex"/>
    <property type="evidence" value="ECO:0007669"/>
    <property type="project" value="UniProtKB-UniRule"/>
</dbReference>
<dbReference type="GO" id="GO:0005524">
    <property type="term" value="F:ATP binding"/>
    <property type="evidence" value="ECO:0007669"/>
    <property type="project" value="UniProtKB-UniRule"/>
</dbReference>
<dbReference type="GO" id="GO:0016887">
    <property type="term" value="F:ATP hydrolysis activity"/>
    <property type="evidence" value="ECO:0007669"/>
    <property type="project" value="InterPro"/>
</dbReference>
<dbReference type="GO" id="GO:0008233">
    <property type="term" value="F:peptidase activity"/>
    <property type="evidence" value="ECO:0007669"/>
    <property type="project" value="InterPro"/>
</dbReference>
<dbReference type="GO" id="GO:0036402">
    <property type="term" value="F:proteasome-activating activity"/>
    <property type="evidence" value="ECO:0007669"/>
    <property type="project" value="UniProtKB-UniRule"/>
</dbReference>
<dbReference type="GO" id="GO:0043335">
    <property type="term" value="P:protein unfolding"/>
    <property type="evidence" value="ECO:0007669"/>
    <property type="project" value="UniProtKB-UniRule"/>
</dbReference>
<dbReference type="GO" id="GO:0051603">
    <property type="term" value="P:proteolysis involved in protein catabolic process"/>
    <property type="evidence" value="ECO:0007669"/>
    <property type="project" value="TreeGrafter"/>
</dbReference>
<dbReference type="CDD" id="cd19498">
    <property type="entry name" value="RecA-like_HslU"/>
    <property type="match status" value="1"/>
</dbReference>
<dbReference type="FunFam" id="1.10.8.10:FF:000028">
    <property type="entry name" value="ATP-dependent protease ATPase subunit HslU"/>
    <property type="match status" value="1"/>
</dbReference>
<dbReference type="FunFam" id="3.40.50.300:FF:000213">
    <property type="entry name" value="ATP-dependent protease ATPase subunit HslU"/>
    <property type="match status" value="1"/>
</dbReference>
<dbReference type="FunFam" id="3.40.50.300:FF:000220">
    <property type="entry name" value="ATP-dependent protease ATPase subunit HslU"/>
    <property type="match status" value="1"/>
</dbReference>
<dbReference type="Gene3D" id="1.10.8.60">
    <property type="match status" value="1"/>
</dbReference>
<dbReference type="Gene3D" id="1.10.8.10">
    <property type="entry name" value="DNA helicase RuvA subunit, C-terminal domain"/>
    <property type="match status" value="2"/>
</dbReference>
<dbReference type="Gene3D" id="3.40.50.300">
    <property type="entry name" value="P-loop containing nucleotide triphosphate hydrolases"/>
    <property type="match status" value="2"/>
</dbReference>
<dbReference type="HAMAP" id="MF_00249">
    <property type="entry name" value="HslU"/>
    <property type="match status" value="1"/>
</dbReference>
<dbReference type="InterPro" id="IPR003593">
    <property type="entry name" value="AAA+_ATPase"/>
</dbReference>
<dbReference type="InterPro" id="IPR050052">
    <property type="entry name" value="ATP-dep_Clp_protease_ClpX"/>
</dbReference>
<dbReference type="InterPro" id="IPR003959">
    <property type="entry name" value="ATPase_AAA_core"/>
</dbReference>
<dbReference type="InterPro" id="IPR019489">
    <property type="entry name" value="Clp_ATPase_C"/>
</dbReference>
<dbReference type="InterPro" id="IPR004491">
    <property type="entry name" value="HslU"/>
</dbReference>
<dbReference type="InterPro" id="IPR027417">
    <property type="entry name" value="P-loop_NTPase"/>
</dbReference>
<dbReference type="NCBIfam" id="TIGR00390">
    <property type="entry name" value="hslU"/>
    <property type="match status" value="1"/>
</dbReference>
<dbReference type="NCBIfam" id="NF003544">
    <property type="entry name" value="PRK05201.1"/>
    <property type="match status" value="1"/>
</dbReference>
<dbReference type="PANTHER" id="PTHR48102">
    <property type="entry name" value="ATP-DEPENDENT CLP PROTEASE ATP-BINDING SUBUNIT CLPX-LIKE, MITOCHONDRIAL-RELATED"/>
    <property type="match status" value="1"/>
</dbReference>
<dbReference type="PANTHER" id="PTHR48102:SF3">
    <property type="entry name" value="ATP-DEPENDENT PROTEASE ATPASE SUBUNIT HSLU"/>
    <property type="match status" value="1"/>
</dbReference>
<dbReference type="Pfam" id="PF00004">
    <property type="entry name" value="AAA"/>
    <property type="match status" value="1"/>
</dbReference>
<dbReference type="Pfam" id="PF07724">
    <property type="entry name" value="AAA_2"/>
    <property type="match status" value="1"/>
</dbReference>
<dbReference type="SMART" id="SM00382">
    <property type="entry name" value="AAA"/>
    <property type="match status" value="1"/>
</dbReference>
<dbReference type="SMART" id="SM01086">
    <property type="entry name" value="ClpB_D2-small"/>
    <property type="match status" value="1"/>
</dbReference>
<dbReference type="SUPFAM" id="SSF52540">
    <property type="entry name" value="P-loop containing nucleoside triphosphate hydrolases"/>
    <property type="match status" value="1"/>
</dbReference>
<protein>
    <recommendedName>
        <fullName evidence="1">ATP-dependent protease ATPase subunit HslU</fullName>
    </recommendedName>
    <alternativeName>
        <fullName evidence="1">Unfoldase HslU</fullName>
    </alternativeName>
</protein>
<accession>A5WA35</accession>
<sequence length="447" mass="49982">MSMTPREIVHELNRHIIGQDDAKRAVAIALRNRWRRMQLPAELRAEVTPKNILMIGPTGVGKTEIARRLAKLANAPFLKVEATKFTEVGYVGRDVESIIRDLADAALKMLREQEIIRVRHRAEDAAEDRILDALLPQARVTSFSEEAAQTSSDSNTRQLFRKRLREGQLDDKEIEIEVADAVGVEIAAPPGMEEMTNQLQSLFANMGKGKRKARKLKVKEALKMVRDEEASRLVNEEELKAKALEAVEQHGIVFIDEIDKVAKRGNVGGADVSREGVQRDLLPLIEGCTVNTKLGMVKTDHILFIASGAFHLSKPSDLVPELQGRLPIRVELKALTPEDFERILQEPHASLTEQYQALLKTEGLNIEFLADGIKRLAEIAYQVNEKTENIGARRLHTLLERLLEEVSFSAGDLASTHDEAPIQIDAAYVNSHLGELAQNEDLSRYIL</sequence>